<accession>Q9FT69</accession>
<protein>
    <recommendedName>
        <fullName>ATP-dependent DNA helicase Q-like SIM</fullName>
        <ecNumber evidence="2">5.6.2.4</ecNumber>
    </recommendedName>
    <alternativeName>
        <fullName evidence="9">DNA 3'-5' helicase RecQSIM</fullName>
    </alternativeName>
    <alternativeName>
        <fullName>RecQ-like protein SIM</fullName>
        <shortName>AtRecQsim</shortName>
        <shortName>Similar to RecQ protein</shortName>
    </alternativeName>
</protein>
<sequence length="858" mass="97466">MDLSSDQLVMKIVEMGFEKLDALEAVKAVGGKSCDDAVEYILKGNHRTGGFKPASLLCSSGSNKILGKRAMPSSFSSSESKRQSSLLDHFRSVNQNKKKGDTFGTVEVDSQLETVSEHSEEVRKSLAPVFMESSCFPEGQLLNGCSEASSSWEKRVNSILRNRFGISSLRSFQREALSTWVAHKDCLVLAATGSGKSLCFQIPALLTGKVVVVISPLISLMHDQCLKLSRHKVSACFLGSGQLDNCIEEKAMQGMYQIIYVCPETVVRLIKPLQKLAKTHGIALFAIDEAHCVSKWGHDFRPHYRKLSVLRENFCASNLEFLEYDVPIMALTATATVNVQEDILESLHLSKETKIVLTSFFRPNLQFSVKHSRTKFASSYAKDFQNLVDLYSEKKNSTGKKLAVISRESEEQTDFGSHDSENIHETDYDEDEEDQENSLAKKNSSNGKELSEAYLEDETDIFQSVDDWDVACGEFCAMPSCELLEIPVPSEKQKDLEGLTIIYVPTRKESVNIAKYLCGVGLKAAAYNASLPKKHLRQVHQDFHDNKLQVVVATIAFGMGIDKKNVRKIIHYGWLQSLEAYYQEAGRAGRDGELAECVLYADLSRAPTLLPSRRSKEQTEQAYKMLSDCFRYGMNTSQCRAKILVEYFGEEFSSKKCNSCDVCTEGPPELVDVREEANLLFQVITAFHLQVDNDSEHAPYEDYGLGNSKQNKLSHKPNLLFFISKLREQCEKFKETDCLWWKGLARIMEAEGYIKEMDNKDRRVEIKFIQPTEKGKKQLDFQDDKPLYVYPEADMLLSLKQDRTYSGFSEWGKGWADPEIRRQRLERRERKPRRERKPRKKRTRGRSSTKLHPWRSKE</sequence>
<reference key="1">
    <citation type="journal article" date="2000" name="Nucleic Acids Res.">
        <title>Molecular characterisation of RecQ homologues in Arabidopsis thaliana.</title>
        <authorList>
            <person name="Hartung F."/>
            <person name="Plchova H."/>
            <person name="Puchta H."/>
        </authorList>
    </citation>
    <scope>NUCLEOTIDE SEQUENCE [MRNA]</scope>
    <scope>TISSUE SPECIFICITY</scope>
    <source>
        <strain>cv. Columbia</strain>
        <tissue>Flower</tissue>
    </source>
</reference>
<reference key="2">
    <citation type="journal article" date="2000" name="Nature">
        <title>Sequence and analysis of chromosome 5 of the plant Arabidopsis thaliana.</title>
        <authorList>
            <person name="Tabata S."/>
            <person name="Kaneko T."/>
            <person name="Nakamura Y."/>
            <person name="Kotani H."/>
            <person name="Kato T."/>
            <person name="Asamizu E."/>
            <person name="Miyajima N."/>
            <person name="Sasamoto S."/>
            <person name="Kimura T."/>
            <person name="Hosouchi T."/>
            <person name="Kawashima K."/>
            <person name="Kohara M."/>
            <person name="Matsumoto M."/>
            <person name="Matsuno A."/>
            <person name="Muraki A."/>
            <person name="Nakayama S."/>
            <person name="Nakazaki N."/>
            <person name="Naruo K."/>
            <person name="Okumura S."/>
            <person name="Shinpo S."/>
            <person name="Takeuchi C."/>
            <person name="Wada T."/>
            <person name="Watanabe A."/>
            <person name="Yamada M."/>
            <person name="Yasuda M."/>
            <person name="Sato S."/>
            <person name="de la Bastide M."/>
            <person name="Huang E."/>
            <person name="Spiegel L."/>
            <person name="Gnoj L."/>
            <person name="O'Shaughnessy A."/>
            <person name="Preston R."/>
            <person name="Habermann K."/>
            <person name="Murray J."/>
            <person name="Johnson D."/>
            <person name="Rohlfing T."/>
            <person name="Nelson J."/>
            <person name="Stoneking T."/>
            <person name="Pepin K."/>
            <person name="Spieth J."/>
            <person name="Sekhon M."/>
            <person name="Armstrong J."/>
            <person name="Becker M."/>
            <person name="Belter E."/>
            <person name="Cordum H."/>
            <person name="Cordes M."/>
            <person name="Courtney L."/>
            <person name="Courtney W."/>
            <person name="Dante M."/>
            <person name="Du H."/>
            <person name="Edwards J."/>
            <person name="Fryman J."/>
            <person name="Haakensen B."/>
            <person name="Lamar E."/>
            <person name="Latreille P."/>
            <person name="Leonard S."/>
            <person name="Meyer R."/>
            <person name="Mulvaney E."/>
            <person name="Ozersky P."/>
            <person name="Riley A."/>
            <person name="Strowmatt C."/>
            <person name="Wagner-McPherson C."/>
            <person name="Wollam A."/>
            <person name="Yoakum M."/>
            <person name="Bell M."/>
            <person name="Dedhia N."/>
            <person name="Parnell L."/>
            <person name="Shah R."/>
            <person name="Rodriguez M."/>
            <person name="Hoon See L."/>
            <person name="Vil D."/>
            <person name="Baker J."/>
            <person name="Kirchoff K."/>
            <person name="Toth K."/>
            <person name="King L."/>
            <person name="Bahret A."/>
            <person name="Miller B."/>
            <person name="Marra M.A."/>
            <person name="Martienssen R."/>
            <person name="McCombie W.R."/>
            <person name="Wilson R.K."/>
            <person name="Murphy G."/>
            <person name="Bancroft I."/>
            <person name="Volckaert G."/>
            <person name="Wambutt R."/>
            <person name="Duesterhoeft A."/>
            <person name="Stiekema W."/>
            <person name="Pohl T."/>
            <person name="Entian K.-D."/>
            <person name="Terryn N."/>
            <person name="Hartley N."/>
            <person name="Bent E."/>
            <person name="Johnson S."/>
            <person name="Langham S.-A."/>
            <person name="McCullagh B."/>
            <person name="Robben J."/>
            <person name="Grymonprez B."/>
            <person name="Zimmermann W."/>
            <person name="Ramsperger U."/>
            <person name="Wedler H."/>
            <person name="Balke K."/>
            <person name="Wedler E."/>
            <person name="Peters S."/>
            <person name="van Staveren M."/>
            <person name="Dirkse W."/>
            <person name="Mooijman P."/>
            <person name="Klein Lankhorst R."/>
            <person name="Weitzenegger T."/>
            <person name="Bothe G."/>
            <person name="Rose M."/>
            <person name="Hauf J."/>
            <person name="Berneiser S."/>
            <person name="Hempel S."/>
            <person name="Feldpausch M."/>
            <person name="Lamberth S."/>
            <person name="Villarroel R."/>
            <person name="Gielen J."/>
            <person name="Ardiles W."/>
            <person name="Bents O."/>
            <person name="Lemcke K."/>
            <person name="Kolesov G."/>
            <person name="Mayer K.F.X."/>
            <person name="Rudd S."/>
            <person name="Schoof H."/>
            <person name="Schueller C."/>
            <person name="Zaccaria P."/>
            <person name="Mewes H.-W."/>
            <person name="Bevan M."/>
            <person name="Fransz P.F."/>
        </authorList>
    </citation>
    <scope>NUCLEOTIDE SEQUENCE [LARGE SCALE GENOMIC DNA]</scope>
    <source>
        <strain>cv. Columbia</strain>
    </source>
</reference>
<reference key="3">
    <citation type="journal article" date="2017" name="Plant J.">
        <title>Araport11: a complete reannotation of the Arabidopsis thaliana reference genome.</title>
        <authorList>
            <person name="Cheng C.Y."/>
            <person name="Krishnakumar V."/>
            <person name="Chan A.P."/>
            <person name="Thibaud-Nissen F."/>
            <person name="Schobel S."/>
            <person name="Town C.D."/>
        </authorList>
    </citation>
    <scope>GENOME REANNOTATION</scope>
    <source>
        <strain>cv. Columbia</strain>
    </source>
</reference>
<reference key="4">
    <citation type="journal article" date="2003" name="Science">
        <title>Empirical analysis of transcriptional activity in the Arabidopsis genome.</title>
        <authorList>
            <person name="Yamada K."/>
            <person name="Lim J."/>
            <person name="Dale J.M."/>
            <person name="Chen H."/>
            <person name="Shinn P."/>
            <person name="Palm C.J."/>
            <person name="Southwick A.M."/>
            <person name="Wu H.C."/>
            <person name="Kim C.J."/>
            <person name="Nguyen M."/>
            <person name="Pham P.K."/>
            <person name="Cheuk R.F."/>
            <person name="Karlin-Newmann G."/>
            <person name="Liu S.X."/>
            <person name="Lam B."/>
            <person name="Sakano H."/>
            <person name="Wu T."/>
            <person name="Yu G."/>
            <person name="Miranda M."/>
            <person name="Quach H.L."/>
            <person name="Tripp M."/>
            <person name="Chang C.H."/>
            <person name="Lee J.M."/>
            <person name="Toriumi M.J."/>
            <person name="Chan M.M."/>
            <person name="Tang C.C."/>
            <person name="Onodera C.S."/>
            <person name="Deng J.M."/>
            <person name="Akiyama K."/>
            <person name="Ansari Y."/>
            <person name="Arakawa T."/>
            <person name="Banh J."/>
            <person name="Banno F."/>
            <person name="Bowser L."/>
            <person name="Brooks S.Y."/>
            <person name="Carninci P."/>
            <person name="Chao Q."/>
            <person name="Choy N."/>
            <person name="Enju A."/>
            <person name="Goldsmith A.D."/>
            <person name="Gurjal M."/>
            <person name="Hansen N.F."/>
            <person name="Hayashizaki Y."/>
            <person name="Johnson-Hopson C."/>
            <person name="Hsuan V.W."/>
            <person name="Iida K."/>
            <person name="Karnes M."/>
            <person name="Khan S."/>
            <person name="Koesema E."/>
            <person name="Ishida J."/>
            <person name="Jiang P.X."/>
            <person name="Jones T."/>
            <person name="Kawai J."/>
            <person name="Kamiya A."/>
            <person name="Meyers C."/>
            <person name="Nakajima M."/>
            <person name="Narusaka M."/>
            <person name="Seki M."/>
            <person name="Sakurai T."/>
            <person name="Satou M."/>
            <person name="Tamse R."/>
            <person name="Vaysberg M."/>
            <person name="Wallender E.K."/>
            <person name="Wong C."/>
            <person name="Yamamura Y."/>
            <person name="Yuan S."/>
            <person name="Shinozaki K."/>
            <person name="Davis R.W."/>
            <person name="Theologis A."/>
            <person name="Ecker J.R."/>
        </authorList>
    </citation>
    <scope>NUCLEOTIDE SEQUENCE [LARGE SCALE MRNA]</scope>
    <source>
        <strain>cv. Columbia</strain>
    </source>
</reference>
<reference key="5">
    <citation type="journal article" date="2003" name="Plant Mol. Biol.">
        <title>Arabidopsis RecQsim, a plant-specific member of the RecQ helicase family, can suppress the MMS hypersensitivity of the yeast sgs1 mutant.</title>
        <authorList>
            <person name="Bagherieh-Najjar M.B."/>
            <person name="de Vries O.M."/>
            <person name="Kroon J.T."/>
            <person name="Wright E.L."/>
            <person name="Elborough K.M."/>
            <person name="Hille J."/>
            <person name="Dijkwel P.P."/>
        </authorList>
    </citation>
    <scope>FUNCTION</scope>
    <scope>TISSUE SPECIFICITY</scope>
</reference>
<reference key="6">
    <citation type="journal article" date="2006" name="J. Plant Physiol.">
        <title>The RecQ gene family in plants.</title>
        <authorList>
            <person name="Hartung F."/>
            <person name="Puchta H."/>
        </authorList>
    </citation>
    <scope>GENE FAMILY</scope>
    <scope>NOMENCLATURE</scope>
</reference>
<reference key="7">
    <citation type="journal article" date="2013" name="PLoS ONE">
        <title>Genome-wide comparative in silico analysis of the RNA helicase gene family in Zea mays and Glycine max: a comparison with Arabidopsis and Oryza sativa.</title>
        <authorList>
            <person name="Xu R."/>
            <person name="Zhang S."/>
            <person name="Huang J."/>
            <person name="Zheng C."/>
        </authorList>
    </citation>
    <scope>GENE FAMILY</scope>
</reference>
<gene>
    <name type="primary">RECQSIM</name>
    <name type="ordered locus">At5g27680</name>
    <name type="ORF">T1G16.10</name>
</gene>
<name>RQSIM_ARATH</name>
<keyword id="KW-0067">ATP-binding</keyword>
<keyword id="KW-0238">DNA-binding</keyword>
<keyword id="KW-0347">Helicase</keyword>
<keyword id="KW-0378">Hydrolase</keyword>
<keyword id="KW-0413">Isomerase</keyword>
<keyword id="KW-0460">Magnesium</keyword>
<keyword id="KW-0464">Manganese</keyword>
<keyword id="KW-0479">Metal-binding</keyword>
<keyword id="KW-0547">Nucleotide-binding</keyword>
<keyword id="KW-0539">Nucleus</keyword>
<keyword id="KW-1185">Reference proteome</keyword>
<proteinExistence type="evidence at transcript level"/>
<feature type="chain" id="PRO_0000394532" description="ATP-dependent DNA helicase Q-like SIM">
    <location>
        <begin position="1"/>
        <end position="858"/>
    </location>
</feature>
<feature type="domain" description="UBA" evidence="3">
    <location>
        <begin position="2"/>
        <end position="44"/>
    </location>
</feature>
<feature type="domain" description="Helicase ATP-binding" evidence="4">
    <location>
        <begin position="177"/>
        <end position="353"/>
    </location>
</feature>
<feature type="domain" description="Helicase C-terminal" evidence="5">
    <location>
        <begin position="491"/>
        <end position="627"/>
    </location>
</feature>
<feature type="region of interest" description="Disordered" evidence="6">
    <location>
        <begin position="402"/>
        <end position="450"/>
    </location>
</feature>
<feature type="region of interest" description="Disordered" evidence="6">
    <location>
        <begin position="822"/>
        <end position="858"/>
    </location>
</feature>
<feature type="short sequence motif" description="DEAH box">
    <location>
        <begin position="288"/>
        <end position="291"/>
    </location>
</feature>
<feature type="compositionally biased region" description="Basic and acidic residues" evidence="6">
    <location>
        <begin position="416"/>
        <end position="426"/>
    </location>
</feature>
<feature type="compositionally biased region" description="Acidic residues" evidence="6">
    <location>
        <begin position="427"/>
        <end position="436"/>
    </location>
</feature>
<feature type="compositionally biased region" description="Polar residues" evidence="6">
    <location>
        <begin position="437"/>
        <end position="448"/>
    </location>
</feature>
<feature type="compositionally biased region" description="Basic residues" evidence="6">
    <location>
        <begin position="830"/>
        <end position="858"/>
    </location>
</feature>
<feature type="binding site" evidence="4">
    <location>
        <begin position="190"/>
        <end position="197"/>
    </location>
    <ligand>
        <name>ATP</name>
        <dbReference type="ChEBI" id="CHEBI:30616"/>
    </ligand>
</feature>
<evidence type="ECO:0000250" key="1"/>
<evidence type="ECO:0000250" key="2">
    <source>
        <dbReference type="UniProtKB" id="Q9FT73"/>
    </source>
</evidence>
<evidence type="ECO:0000255" key="3">
    <source>
        <dbReference type="PROSITE-ProRule" id="PRU00212"/>
    </source>
</evidence>
<evidence type="ECO:0000255" key="4">
    <source>
        <dbReference type="PROSITE-ProRule" id="PRU00541"/>
    </source>
</evidence>
<evidence type="ECO:0000255" key="5">
    <source>
        <dbReference type="PROSITE-ProRule" id="PRU00542"/>
    </source>
</evidence>
<evidence type="ECO:0000256" key="6">
    <source>
        <dbReference type="SAM" id="MobiDB-lite"/>
    </source>
</evidence>
<evidence type="ECO:0000269" key="7">
    <source>
    </source>
</evidence>
<evidence type="ECO:0000269" key="8">
    <source>
    </source>
</evidence>
<evidence type="ECO:0000305" key="9"/>
<evidence type="ECO:0000305" key="10">
    <source>
    </source>
</evidence>
<comment type="function">
    <text evidence="10">Plant specific, probable 3'-5' DNA helicase that may play a role in the repair of DNA.</text>
</comment>
<comment type="catalytic activity">
    <reaction evidence="2">
        <text>Couples ATP hydrolysis with the unwinding of duplex DNA by translocating in the 3'-5' direction.</text>
        <dbReference type="EC" id="5.6.2.4"/>
    </reaction>
</comment>
<comment type="catalytic activity">
    <reaction evidence="9">
        <text>ATP + H2O = ADP + phosphate + H(+)</text>
        <dbReference type="Rhea" id="RHEA:13065"/>
        <dbReference type="ChEBI" id="CHEBI:15377"/>
        <dbReference type="ChEBI" id="CHEBI:15378"/>
        <dbReference type="ChEBI" id="CHEBI:30616"/>
        <dbReference type="ChEBI" id="CHEBI:43474"/>
        <dbReference type="ChEBI" id="CHEBI:456216"/>
    </reaction>
</comment>
<comment type="cofactor">
    <cofactor evidence="1">
        <name>Mg(2+)</name>
        <dbReference type="ChEBI" id="CHEBI:18420"/>
    </cofactor>
    <cofactor evidence="1">
        <name>Mn(2+)</name>
        <dbReference type="ChEBI" id="CHEBI:29035"/>
    </cofactor>
</comment>
<comment type="subcellular location">
    <subcellularLocation>
        <location evidence="1">Nucleus</location>
    </subcellularLocation>
</comment>
<comment type="tissue specificity">
    <text evidence="7 8">Mostly expressed in roots and seedlings, and, to a lower extent, in leaves, shoots, shoot apical mersitem, inflorescences, flowers, siliques and seeds.</text>
</comment>
<comment type="similarity">
    <text evidence="9">Belongs to the helicase family. RecQ subfamily.</text>
</comment>
<dbReference type="EC" id="5.6.2.4" evidence="2"/>
<dbReference type="EMBL" id="AJ404475">
    <property type="protein sequence ID" value="CAC14870.1"/>
    <property type="molecule type" value="mRNA"/>
</dbReference>
<dbReference type="EMBL" id="AC007478">
    <property type="status" value="NOT_ANNOTATED_CDS"/>
    <property type="molecule type" value="Genomic_DNA"/>
</dbReference>
<dbReference type="EMBL" id="AC069556">
    <property type="status" value="NOT_ANNOTATED_CDS"/>
    <property type="molecule type" value="Genomic_DNA"/>
</dbReference>
<dbReference type="EMBL" id="CP002688">
    <property type="protein sequence ID" value="AED93714.1"/>
    <property type="molecule type" value="Genomic_DNA"/>
</dbReference>
<dbReference type="EMBL" id="CP002688">
    <property type="protein sequence ID" value="ANM69089.1"/>
    <property type="molecule type" value="Genomic_DNA"/>
</dbReference>
<dbReference type="EMBL" id="CP002688">
    <property type="protein sequence ID" value="ANM69091.1"/>
    <property type="molecule type" value="Genomic_DNA"/>
</dbReference>
<dbReference type="EMBL" id="CP002688">
    <property type="protein sequence ID" value="ANM69093.1"/>
    <property type="molecule type" value="Genomic_DNA"/>
</dbReference>
<dbReference type="EMBL" id="AY059754">
    <property type="protein sequence ID" value="AAL24102.1"/>
    <property type="molecule type" value="mRNA"/>
</dbReference>
<dbReference type="EMBL" id="AY133823">
    <property type="protein sequence ID" value="AAM91757.1"/>
    <property type="molecule type" value="mRNA"/>
</dbReference>
<dbReference type="RefSeq" id="NP_001330792.1">
    <property type="nucleotide sequence ID" value="NM_001344027.1"/>
</dbReference>
<dbReference type="RefSeq" id="NP_001330794.1">
    <property type="nucleotide sequence ID" value="NM_001344029.1"/>
</dbReference>
<dbReference type="RefSeq" id="NP_001330796.1">
    <property type="nucleotide sequence ID" value="NM_001344028.1"/>
</dbReference>
<dbReference type="RefSeq" id="NP_568499.1">
    <property type="nucleotide sequence ID" value="NM_122650.5"/>
</dbReference>
<dbReference type="SMR" id="Q9FT69"/>
<dbReference type="BioGRID" id="18104">
    <property type="interactions" value="1"/>
</dbReference>
<dbReference type="FunCoup" id="Q9FT69">
    <property type="interactions" value="520"/>
</dbReference>
<dbReference type="IntAct" id="Q9FT69">
    <property type="interactions" value="1"/>
</dbReference>
<dbReference type="STRING" id="3702.Q9FT69"/>
<dbReference type="PaxDb" id="3702-AT5G27680.1"/>
<dbReference type="ProteomicsDB" id="228252"/>
<dbReference type="EnsemblPlants" id="AT5G27680.1">
    <property type="protein sequence ID" value="AT5G27680.1"/>
    <property type="gene ID" value="AT5G27680"/>
</dbReference>
<dbReference type="EnsemblPlants" id="AT5G27680.2">
    <property type="protein sequence ID" value="AT5G27680.2"/>
    <property type="gene ID" value="AT5G27680"/>
</dbReference>
<dbReference type="EnsemblPlants" id="AT5G27680.3">
    <property type="protein sequence ID" value="AT5G27680.3"/>
    <property type="gene ID" value="AT5G27680"/>
</dbReference>
<dbReference type="EnsemblPlants" id="AT5G27680.4">
    <property type="protein sequence ID" value="AT5G27680.4"/>
    <property type="gene ID" value="AT5G27680"/>
</dbReference>
<dbReference type="GeneID" id="832830"/>
<dbReference type="Gramene" id="AT5G27680.1">
    <property type="protein sequence ID" value="AT5G27680.1"/>
    <property type="gene ID" value="AT5G27680"/>
</dbReference>
<dbReference type="Gramene" id="AT5G27680.2">
    <property type="protein sequence ID" value="AT5G27680.2"/>
    <property type="gene ID" value="AT5G27680"/>
</dbReference>
<dbReference type="Gramene" id="AT5G27680.3">
    <property type="protein sequence ID" value="AT5G27680.3"/>
    <property type="gene ID" value="AT5G27680"/>
</dbReference>
<dbReference type="Gramene" id="AT5G27680.4">
    <property type="protein sequence ID" value="AT5G27680.4"/>
    <property type="gene ID" value="AT5G27680"/>
</dbReference>
<dbReference type="KEGG" id="ath:AT5G27680"/>
<dbReference type="Araport" id="AT5G27680"/>
<dbReference type="TAIR" id="AT5G27680">
    <property type="gene designation" value="RECQSIM"/>
</dbReference>
<dbReference type="eggNOG" id="KOG0351">
    <property type="taxonomic scope" value="Eukaryota"/>
</dbReference>
<dbReference type="HOGENOM" id="CLU_008232_0_0_1"/>
<dbReference type="InParanoid" id="Q9FT69"/>
<dbReference type="PhylomeDB" id="Q9FT69"/>
<dbReference type="BRENDA" id="3.6.4.12">
    <property type="organism ID" value="399"/>
</dbReference>
<dbReference type="PRO" id="PR:Q9FT69"/>
<dbReference type="Proteomes" id="UP000006548">
    <property type="component" value="Chromosome 5"/>
</dbReference>
<dbReference type="ExpressionAtlas" id="Q9FT69">
    <property type="expression patterns" value="baseline and differential"/>
</dbReference>
<dbReference type="GO" id="GO:0005634">
    <property type="term" value="C:nucleus"/>
    <property type="evidence" value="ECO:0007669"/>
    <property type="project" value="UniProtKB-SubCell"/>
</dbReference>
<dbReference type="GO" id="GO:0043138">
    <property type="term" value="F:3'-5' DNA helicase activity"/>
    <property type="evidence" value="ECO:0000314"/>
    <property type="project" value="UniProtKB"/>
</dbReference>
<dbReference type="GO" id="GO:0005524">
    <property type="term" value="F:ATP binding"/>
    <property type="evidence" value="ECO:0007669"/>
    <property type="project" value="UniProtKB-KW"/>
</dbReference>
<dbReference type="GO" id="GO:0016887">
    <property type="term" value="F:ATP hydrolysis activity"/>
    <property type="evidence" value="ECO:0007669"/>
    <property type="project" value="RHEA"/>
</dbReference>
<dbReference type="GO" id="GO:0003677">
    <property type="term" value="F:DNA binding"/>
    <property type="evidence" value="ECO:0007669"/>
    <property type="project" value="UniProtKB-KW"/>
</dbReference>
<dbReference type="GO" id="GO:0046872">
    <property type="term" value="F:metal ion binding"/>
    <property type="evidence" value="ECO:0007669"/>
    <property type="project" value="UniProtKB-KW"/>
</dbReference>
<dbReference type="GO" id="GO:0006310">
    <property type="term" value="P:DNA recombination"/>
    <property type="evidence" value="ECO:0007669"/>
    <property type="project" value="InterPro"/>
</dbReference>
<dbReference type="GO" id="GO:0006281">
    <property type="term" value="P:DNA repair"/>
    <property type="evidence" value="ECO:0000314"/>
    <property type="project" value="UniProtKB"/>
</dbReference>
<dbReference type="CDD" id="cd17920">
    <property type="entry name" value="DEXHc_RecQ"/>
    <property type="match status" value="1"/>
</dbReference>
<dbReference type="FunFam" id="1.10.10.10:FF:000782">
    <property type="entry name" value="ATP-dependent DNA helicase"/>
    <property type="match status" value="1"/>
</dbReference>
<dbReference type="FunFam" id="3.40.50.300:FF:001391">
    <property type="entry name" value="ATP-dependent DNA helicase"/>
    <property type="match status" value="1"/>
</dbReference>
<dbReference type="FunFam" id="3.40.50.300:FF:001456">
    <property type="entry name" value="ATP-dependent DNA helicase"/>
    <property type="match status" value="1"/>
</dbReference>
<dbReference type="Gene3D" id="1.10.8.10">
    <property type="entry name" value="DNA helicase RuvA subunit, C-terminal domain"/>
    <property type="match status" value="1"/>
</dbReference>
<dbReference type="Gene3D" id="3.40.50.300">
    <property type="entry name" value="P-loop containing nucleotide triphosphate hydrolases"/>
    <property type="match status" value="2"/>
</dbReference>
<dbReference type="Gene3D" id="1.10.10.10">
    <property type="entry name" value="Winged helix-like DNA-binding domain superfamily/Winged helix DNA-binding domain"/>
    <property type="match status" value="1"/>
</dbReference>
<dbReference type="InterPro" id="IPR011545">
    <property type="entry name" value="DEAD/DEAH_box_helicase_dom"/>
</dbReference>
<dbReference type="InterPro" id="IPR004589">
    <property type="entry name" value="DNA_helicase_ATP-dep_RecQ"/>
</dbReference>
<dbReference type="InterPro" id="IPR014001">
    <property type="entry name" value="Helicase_ATP-bd"/>
</dbReference>
<dbReference type="InterPro" id="IPR001650">
    <property type="entry name" value="Helicase_C-like"/>
</dbReference>
<dbReference type="InterPro" id="IPR027417">
    <property type="entry name" value="P-loop_NTPase"/>
</dbReference>
<dbReference type="InterPro" id="IPR032284">
    <property type="entry name" value="RecQ_Zn-bd"/>
</dbReference>
<dbReference type="InterPro" id="IPR015940">
    <property type="entry name" value="UBA"/>
</dbReference>
<dbReference type="InterPro" id="IPR009060">
    <property type="entry name" value="UBA-like_sf"/>
</dbReference>
<dbReference type="InterPro" id="IPR036388">
    <property type="entry name" value="WH-like_DNA-bd_sf"/>
</dbReference>
<dbReference type="NCBIfam" id="TIGR00614">
    <property type="entry name" value="recQ_fam"/>
    <property type="match status" value="1"/>
</dbReference>
<dbReference type="PANTHER" id="PTHR13710:SF69">
    <property type="entry name" value="ATP-DEPENDENT DNA HELICASE Q-LIKE SIM"/>
    <property type="match status" value="1"/>
</dbReference>
<dbReference type="PANTHER" id="PTHR13710">
    <property type="entry name" value="DNA HELICASE RECQ FAMILY MEMBER"/>
    <property type="match status" value="1"/>
</dbReference>
<dbReference type="Pfam" id="PF00270">
    <property type="entry name" value="DEAD"/>
    <property type="match status" value="1"/>
</dbReference>
<dbReference type="Pfam" id="PF00271">
    <property type="entry name" value="Helicase_C"/>
    <property type="match status" value="1"/>
</dbReference>
<dbReference type="Pfam" id="PF16124">
    <property type="entry name" value="RecQ_Zn_bind"/>
    <property type="match status" value="1"/>
</dbReference>
<dbReference type="SMART" id="SM00487">
    <property type="entry name" value="DEXDc"/>
    <property type="match status" value="1"/>
</dbReference>
<dbReference type="SMART" id="SM00490">
    <property type="entry name" value="HELICc"/>
    <property type="match status" value="1"/>
</dbReference>
<dbReference type="SUPFAM" id="SSF52540">
    <property type="entry name" value="P-loop containing nucleoside triphosphate hydrolases"/>
    <property type="match status" value="1"/>
</dbReference>
<dbReference type="SUPFAM" id="SSF46934">
    <property type="entry name" value="UBA-like"/>
    <property type="match status" value="1"/>
</dbReference>
<dbReference type="PROSITE" id="PS51192">
    <property type="entry name" value="HELICASE_ATP_BIND_1"/>
    <property type="match status" value="1"/>
</dbReference>
<dbReference type="PROSITE" id="PS51194">
    <property type="entry name" value="HELICASE_CTER"/>
    <property type="match status" value="1"/>
</dbReference>
<dbReference type="PROSITE" id="PS50030">
    <property type="entry name" value="UBA"/>
    <property type="match status" value="1"/>
</dbReference>
<organism>
    <name type="scientific">Arabidopsis thaliana</name>
    <name type="common">Mouse-ear cress</name>
    <dbReference type="NCBI Taxonomy" id="3702"/>
    <lineage>
        <taxon>Eukaryota</taxon>
        <taxon>Viridiplantae</taxon>
        <taxon>Streptophyta</taxon>
        <taxon>Embryophyta</taxon>
        <taxon>Tracheophyta</taxon>
        <taxon>Spermatophyta</taxon>
        <taxon>Magnoliopsida</taxon>
        <taxon>eudicotyledons</taxon>
        <taxon>Gunneridae</taxon>
        <taxon>Pentapetalae</taxon>
        <taxon>rosids</taxon>
        <taxon>malvids</taxon>
        <taxon>Brassicales</taxon>
        <taxon>Brassicaceae</taxon>
        <taxon>Camelineae</taxon>
        <taxon>Arabidopsis</taxon>
    </lineage>
</organism>